<sequence>MLFFFFSSKKTVRVCRQLKTVTVLIVPVLPVYTNKVLCCSQCDWHEPANVYSIEQRRSHDDDLPTIKGSDASTQQYERKTYITDASPESQNLFLSKSKEEGVIFLCIQIKKLLGKWESKLKIIKFNKLAKYVYEGNQFFLFIFFLSICQIRNF</sequence>
<proteinExistence type="inferred from homology"/>
<name>YHEI_SCHPO</name>
<feature type="chain" id="PRO_0000116771" description="UPF0768 protein PB2B2.18">
    <location>
        <begin position="1"/>
        <end position="153"/>
    </location>
</feature>
<evidence type="ECO:0000305" key="1"/>
<protein>
    <recommendedName>
        <fullName>UPF0768 protein PB2B2.18</fullName>
    </recommendedName>
</protein>
<comment type="similarity">
    <text evidence="1">Belongs to the UPF0768 family.</text>
</comment>
<keyword id="KW-1185">Reference proteome</keyword>
<dbReference type="EMBL" id="CU329671">
    <property type="protein sequence ID" value="CAC21420.2"/>
    <property type="molecule type" value="Genomic_DNA"/>
</dbReference>
<dbReference type="RefSeq" id="NP_596864.2">
    <property type="nucleotide sequence ID" value="NM_001023887.2"/>
</dbReference>
<dbReference type="BioGRID" id="277913">
    <property type="interactions" value="42"/>
</dbReference>
<dbReference type="STRING" id="284812.Q9HDT9"/>
<dbReference type="iPTMnet" id="Q9HDT9"/>
<dbReference type="PaxDb" id="4896-SPBPB2B2.18.1"/>
<dbReference type="EnsemblFungi" id="SPBPB2B2.18.1">
    <property type="protein sequence ID" value="SPBPB2B2.18.1:pep"/>
    <property type="gene ID" value="SPBPB2B2.18"/>
</dbReference>
<dbReference type="KEGG" id="spo:2541404"/>
<dbReference type="PomBase" id="SPBPB2B2.18"/>
<dbReference type="VEuPathDB" id="FungiDB:SPBPB2B2.18"/>
<dbReference type="HOGENOM" id="CLU_1714364_0_0_1"/>
<dbReference type="InParanoid" id="Q9HDT9"/>
<dbReference type="PRO" id="PR:Q9HDT9"/>
<dbReference type="Proteomes" id="UP000002485">
    <property type="component" value="Chromosome II"/>
</dbReference>
<dbReference type="PANTHER" id="PTHR28139">
    <property type="entry name" value="UPF0768 PROTEIN YBL029C-A"/>
    <property type="match status" value="1"/>
</dbReference>
<dbReference type="PANTHER" id="PTHR28139:SF1">
    <property type="entry name" value="UPF0768 PROTEIN YBL029C-A"/>
    <property type="match status" value="1"/>
</dbReference>
<gene>
    <name type="ORF">SPBPB2B2.18</name>
</gene>
<reference key="1">
    <citation type="journal article" date="2002" name="Nature">
        <title>The genome sequence of Schizosaccharomyces pombe.</title>
        <authorList>
            <person name="Wood V."/>
            <person name="Gwilliam R."/>
            <person name="Rajandream M.A."/>
            <person name="Lyne M.H."/>
            <person name="Lyne R."/>
            <person name="Stewart A."/>
            <person name="Sgouros J.G."/>
            <person name="Peat N."/>
            <person name="Hayles J."/>
            <person name="Baker S.G."/>
            <person name="Basham D."/>
            <person name="Bowman S."/>
            <person name="Brooks K."/>
            <person name="Brown D."/>
            <person name="Brown S."/>
            <person name="Chillingworth T."/>
            <person name="Churcher C.M."/>
            <person name="Collins M."/>
            <person name="Connor R."/>
            <person name="Cronin A."/>
            <person name="Davis P."/>
            <person name="Feltwell T."/>
            <person name="Fraser A."/>
            <person name="Gentles S."/>
            <person name="Goble A."/>
            <person name="Hamlin N."/>
            <person name="Harris D.E."/>
            <person name="Hidalgo J."/>
            <person name="Hodgson G."/>
            <person name="Holroyd S."/>
            <person name="Hornsby T."/>
            <person name="Howarth S."/>
            <person name="Huckle E.J."/>
            <person name="Hunt S."/>
            <person name="Jagels K."/>
            <person name="James K.D."/>
            <person name="Jones L."/>
            <person name="Jones M."/>
            <person name="Leather S."/>
            <person name="McDonald S."/>
            <person name="McLean J."/>
            <person name="Mooney P."/>
            <person name="Moule S."/>
            <person name="Mungall K.L."/>
            <person name="Murphy L.D."/>
            <person name="Niblett D."/>
            <person name="Odell C."/>
            <person name="Oliver K."/>
            <person name="O'Neil S."/>
            <person name="Pearson D."/>
            <person name="Quail M.A."/>
            <person name="Rabbinowitsch E."/>
            <person name="Rutherford K.M."/>
            <person name="Rutter S."/>
            <person name="Saunders D."/>
            <person name="Seeger K."/>
            <person name="Sharp S."/>
            <person name="Skelton J."/>
            <person name="Simmonds M.N."/>
            <person name="Squares R."/>
            <person name="Squares S."/>
            <person name="Stevens K."/>
            <person name="Taylor K."/>
            <person name="Taylor R.G."/>
            <person name="Tivey A."/>
            <person name="Walsh S.V."/>
            <person name="Warren T."/>
            <person name="Whitehead S."/>
            <person name="Woodward J.R."/>
            <person name="Volckaert G."/>
            <person name="Aert R."/>
            <person name="Robben J."/>
            <person name="Grymonprez B."/>
            <person name="Weltjens I."/>
            <person name="Vanstreels E."/>
            <person name="Rieger M."/>
            <person name="Schaefer M."/>
            <person name="Mueller-Auer S."/>
            <person name="Gabel C."/>
            <person name="Fuchs M."/>
            <person name="Duesterhoeft A."/>
            <person name="Fritzc C."/>
            <person name="Holzer E."/>
            <person name="Moestl D."/>
            <person name="Hilbert H."/>
            <person name="Borzym K."/>
            <person name="Langer I."/>
            <person name="Beck A."/>
            <person name="Lehrach H."/>
            <person name="Reinhardt R."/>
            <person name="Pohl T.M."/>
            <person name="Eger P."/>
            <person name="Zimmermann W."/>
            <person name="Wedler H."/>
            <person name="Wambutt R."/>
            <person name="Purnelle B."/>
            <person name="Goffeau A."/>
            <person name="Cadieu E."/>
            <person name="Dreano S."/>
            <person name="Gloux S."/>
            <person name="Lelaure V."/>
            <person name="Mottier S."/>
            <person name="Galibert F."/>
            <person name="Aves S.J."/>
            <person name="Xiang Z."/>
            <person name="Hunt C."/>
            <person name="Moore K."/>
            <person name="Hurst S.M."/>
            <person name="Lucas M."/>
            <person name="Rochet M."/>
            <person name="Gaillardin C."/>
            <person name="Tallada V.A."/>
            <person name="Garzon A."/>
            <person name="Thode G."/>
            <person name="Daga R.R."/>
            <person name="Cruzado L."/>
            <person name="Jimenez J."/>
            <person name="Sanchez M."/>
            <person name="del Rey F."/>
            <person name="Benito J."/>
            <person name="Dominguez A."/>
            <person name="Revuelta J.L."/>
            <person name="Moreno S."/>
            <person name="Armstrong J."/>
            <person name="Forsburg S.L."/>
            <person name="Cerutti L."/>
            <person name="Lowe T."/>
            <person name="McCombie W.R."/>
            <person name="Paulsen I."/>
            <person name="Potashkin J."/>
            <person name="Shpakovski G.V."/>
            <person name="Ussery D."/>
            <person name="Barrell B.G."/>
            <person name="Nurse P."/>
        </authorList>
    </citation>
    <scope>NUCLEOTIDE SEQUENCE [LARGE SCALE GENOMIC DNA]</scope>
    <source>
        <strain>972 / ATCC 24843</strain>
    </source>
</reference>
<organism>
    <name type="scientific">Schizosaccharomyces pombe (strain 972 / ATCC 24843)</name>
    <name type="common">Fission yeast</name>
    <dbReference type="NCBI Taxonomy" id="284812"/>
    <lineage>
        <taxon>Eukaryota</taxon>
        <taxon>Fungi</taxon>
        <taxon>Dikarya</taxon>
        <taxon>Ascomycota</taxon>
        <taxon>Taphrinomycotina</taxon>
        <taxon>Schizosaccharomycetes</taxon>
        <taxon>Schizosaccharomycetales</taxon>
        <taxon>Schizosaccharomycetaceae</taxon>
        <taxon>Schizosaccharomyces</taxon>
    </lineage>
</organism>
<accession>Q9HDT9</accession>